<organism>
    <name type="scientific">Mycobacterium tuberculosis (strain CDC 1551 / Oshkosh)</name>
    <dbReference type="NCBI Taxonomy" id="83331"/>
    <lineage>
        <taxon>Bacteria</taxon>
        <taxon>Bacillati</taxon>
        <taxon>Actinomycetota</taxon>
        <taxon>Actinomycetes</taxon>
        <taxon>Mycobacteriales</taxon>
        <taxon>Mycobacteriaceae</taxon>
        <taxon>Mycobacterium</taxon>
        <taxon>Mycobacterium tuberculosis complex</taxon>
    </lineage>
</organism>
<feature type="chain" id="PRO_0000428166" description="Dihydroorotate dehydrogenase (quinone)">
    <location>
        <begin position="1"/>
        <end position="357"/>
    </location>
</feature>
<feature type="active site" description="Nucleophile" evidence="1">
    <location>
        <position position="179"/>
    </location>
</feature>
<feature type="binding site" evidence="1">
    <location>
        <begin position="66"/>
        <end position="70"/>
    </location>
    <ligand>
        <name>FMN</name>
        <dbReference type="ChEBI" id="CHEBI:58210"/>
    </ligand>
</feature>
<feature type="binding site" evidence="1">
    <location>
        <position position="70"/>
    </location>
    <ligand>
        <name>substrate</name>
    </ligand>
</feature>
<feature type="binding site" evidence="1">
    <location>
        <position position="90"/>
    </location>
    <ligand>
        <name>FMN</name>
        <dbReference type="ChEBI" id="CHEBI:58210"/>
    </ligand>
</feature>
<feature type="binding site" evidence="1">
    <location>
        <begin position="115"/>
        <end position="119"/>
    </location>
    <ligand>
        <name>substrate</name>
    </ligand>
</feature>
<feature type="binding site" evidence="1">
    <location>
        <position position="143"/>
    </location>
    <ligand>
        <name>FMN</name>
        <dbReference type="ChEBI" id="CHEBI:58210"/>
    </ligand>
</feature>
<feature type="binding site" evidence="1">
    <location>
        <position position="176"/>
    </location>
    <ligand>
        <name>FMN</name>
        <dbReference type="ChEBI" id="CHEBI:58210"/>
    </ligand>
</feature>
<feature type="binding site" evidence="1">
    <location>
        <position position="176"/>
    </location>
    <ligand>
        <name>substrate</name>
    </ligand>
</feature>
<feature type="binding site" evidence="1">
    <location>
        <position position="181"/>
    </location>
    <ligand>
        <name>substrate</name>
    </ligand>
</feature>
<feature type="binding site" evidence="1">
    <location>
        <position position="212"/>
    </location>
    <ligand>
        <name>FMN</name>
        <dbReference type="ChEBI" id="CHEBI:58210"/>
    </ligand>
</feature>
<feature type="binding site" evidence="1">
    <location>
        <position position="240"/>
    </location>
    <ligand>
        <name>FMN</name>
        <dbReference type="ChEBI" id="CHEBI:58210"/>
    </ligand>
</feature>
<feature type="binding site" evidence="1">
    <location>
        <begin position="241"/>
        <end position="242"/>
    </location>
    <ligand>
        <name>substrate</name>
    </ligand>
</feature>
<feature type="binding site" evidence="1">
    <location>
        <position position="264"/>
    </location>
    <ligand>
        <name>FMN</name>
        <dbReference type="ChEBI" id="CHEBI:58210"/>
    </ligand>
</feature>
<feature type="binding site" evidence="1">
    <location>
        <position position="293"/>
    </location>
    <ligand>
        <name>FMN</name>
        <dbReference type="ChEBI" id="CHEBI:58210"/>
    </ligand>
</feature>
<feature type="binding site" evidence="1">
    <location>
        <begin position="314"/>
        <end position="315"/>
    </location>
    <ligand>
        <name>FMN</name>
        <dbReference type="ChEBI" id="CHEBI:58210"/>
    </ligand>
</feature>
<accession>P9WHL0</accession>
<accession>L0T8R3</accession>
<accession>O06236</accession>
<accession>P65908</accession>
<keyword id="KW-1003">Cell membrane</keyword>
<keyword id="KW-0285">Flavoprotein</keyword>
<keyword id="KW-0288">FMN</keyword>
<keyword id="KW-0472">Membrane</keyword>
<keyword id="KW-0560">Oxidoreductase</keyword>
<keyword id="KW-0665">Pyrimidine biosynthesis</keyword>
<keyword id="KW-1185">Reference proteome</keyword>
<sequence>MYPLVRRLLFLIPPEHAHKLVFAVLRGVAAVAPVRRLLRRLLGPTDPVLASTVFGVRFPAPLGLAAGFDKDGTALSSWGAMGFGYAEIGTVTAHPQPGNPAPRLFRLADDRALLNRMGFNNHGARALAIRLARHRPEIPIGVNIGKTKKTPAGDAVNDYRASARMVGPLASYLVVNVSSPNTPGLRDLQAVESLRPILSAVRAETSTPVLVKIAPDLSDSDLDDIADLAVELDLAGIVATNTTVSRDGLTTPGVDRLGPGGISGPPLAQRAVQVLRRLYDRVGDRLALISVGGIETADDAWERITAGASLLQGYTGFIYGGERWAKDIHEGIARRLHDGGFGSLHEAVGSARRRQPS</sequence>
<evidence type="ECO:0000250" key="1"/>
<evidence type="ECO:0000305" key="2"/>
<proteinExistence type="inferred from homology"/>
<comment type="function">
    <text evidence="1">Catalyzes the conversion of dihydroorotate to orotate with quinone as electron acceptor.</text>
</comment>
<comment type="catalytic activity">
    <reaction>
        <text>(S)-dihydroorotate + a quinone = orotate + a quinol</text>
        <dbReference type="Rhea" id="RHEA:30187"/>
        <dbReference type="ChEBI" id="CHEBI:24646"/>
        <dbReference type="ChEBI" id="CHEBI:30839"/>
        <dbReference type="ChEBI" id="CHEBI:30864"/>
        <dbReference type="ChEBI" id="CHEBI:132124"/>
        <dbReference type="EC" id="1.3.5.2"/>
    </reaction>
</comment>
<comment type="cofactor">
    <cofactor evidence="1">
        <name>FMN</name>
        <dbReference type="ChEBI" id="CHEBI:58210"/>
    </cofactor>
    <text evidence="1">Binds 1 FMN per subunit.</text>
</comment>
<comment type="pathway">
    <text>Pyrimidine metabolism; UMP biosynthesis via de novo pathway; orotate from (S)-dihydroorotate (quinone route): step 1/1.</text>
</comment>
<comment type="subunit">
    <text evidence="1">Monomer.</text>
</comment>
<comment type="subcellular location">
    <subcellularLocation>
        <location evidence="1">Cell membrane</location>
        <topology evidence="1">Peripheral membrane protein</topology>
    </subcellularLocation>
</comment>
<comment type="similarity">
    <text evidence="2">Belongs to the dihydroorotate dehydrogenase family. Type 2 subfamily.</text>
</comment>
<protein>
    <recommendedName>
        <fullName>Dihydroorotate dehydrogenase (quinone)</fullName>
        <ecNumber>1.3.5.2</ecNumber>
    </recommendedName>
    <alternativeName>
        <fullName>DHOdehase</fullName>
        <shortName>DHOD</shortName>
        <shortName>DHODase</shortName>
    </alternativeName>
    <alternativeName>
        <fullName>Dihydroorotate oxidase</fullName>
    </alternativeName>
</protein>
<gene>
    <name type="primary">pyrD</name>
    <name type="ordered locus">MT2197</name>
</gene>
<dbReference type="EC" id="1.3.5.2"/>
<dbReference type="EMBL" id="AE000516">
    <property type="protein sequence ID" value="AAK46481.1"/>
    <property type="molecule type" value="Genomic_DNA"/>
</dbReference>
<dbReference type="PIR" id="G70577">
    <property type="entry name" value="G70577"/>
</dbReference>
<dbReference type="RefSeq" id="WP_003411116.1">
    <property type="nucleotide sequence ID" value="NZ_KK341227.1"/>
</dbReference>
<dbReference type="SMR" id="P9WHL0"/>
<dbReference type="KEGG" id="mtc:MT2197"/>
<dbReference type="PATRIC" id="fig|83331.31.peg.2370"/>
<dbReference type="HOGENOM" id="CLU_013640_2_0_11"/>
<dbReference type="UniPathway" id="UPA00070">
    <property type="reaction ID" value="UER00946"/>
</dbReference>
<dbReference type="Proteomes" id="UP000001020">
    <property type="component" value="Chromosome"/>
</dbReference>
<dbReference type="GO" id="GO:0005737">
    <property type="term" value="C:cytoplasm"/>
    <property type="evidence" value="ECO:0007669"/>
    <property type="project" value="InterPro"/>
</dbReference>
<dbReference type="GO" id="GO:0005886">
    <property type="term" value="C:plasma membrane"/>
    <property type="evidence" value="ECO:0007669"/>
    <property type="project" value="UniProtKB-SubCell"/>
</dbReference>
<dbReference type="GO" id="GO:0106430">
    <property type="term" value="F:dihydroorotate dehydrogenase (quinone) activity"/>
    <property type="evidence" value="ECO:0007669"/>
    <property type="project" value="UniProtKB-EC"/>
</dbReference>
<dbReference type="GO" id="GO:0006207">
    <property type="term" value="P:'de novo' pyrimidine nucleobase biosynthetic process"/>
    <property type="evidence" value="ECO:0007669"/>
    <property type="project" value="InterPro"/>
</dbReference>
<dbReference type="GO" id="GO:0044205">
    <property type="term" value="P:'de novo' UMP biosynthetic process"/>
    <property type="evidence" value="ECO:0007669"/>
    <property type="project" value="UniProtKB-UniRule"/>
</dbReference>
<dbReference type="CDD" id="cd04738">
    <property type="entry name" value="DHOD_2_like"/>
    <property type="match status" value="1"/>
</dbReference>
<dbReference type="FunFam" id="3.20.20.70:FF:000123">
    <property type="entry name" value="Dihydroorotate dehydrogenase (quinone)"/>
    <property type="match status" value="1"/>
</dbReference>
<dbReference type="Gene3D" id="3.20.20.70">
    <property type="entry name" value="Aldolase class I"/>
    <property type="match status" value="1"/>
</dbReference>
<dbReference type="HAMAP" id="MF_00225">
    <property type="entry name" value="DHO_dh_type2"/>
    <property type="match status" value="1"/>
</dbReference>
<dbReference type="InterPro" id="IPR013785">
    <property type="entry name" value="Aldolase_TIM"/>
</dbReference>
<dbReference type="InterPro" id="IPR050074">
    <property type="entry name" value="DHO_dehydrogenase"/>
</dbReference>
<dbReference type="InterPro" id="IPR005719">
    <property type="entry name" value="Dihydroorotate_DH_2"/>
</dbReference>
<dbReference type="InterPro" id="IPR005720">
    <property type="entry name" value="Dihydroorotate_DH_cat"/>
</dbReference>
<dbReference type="InterPro" id="IPR001295">
    <property type="entry name" value="Dihydroorotate_DH_CS"/>
</dbReference>
<dbReference type="NCBIfam" id="NF003645">
    <property type="entry name" value="PRK05286.1-2"/>
    <property type="match status" value="1"/>
</dbReference>
<dbReference type="NCBIfam" id="NF003648">
    <property type="entry name" value="PRK05286.2-1"/>
    <property type="match status" value="1"/>
</dbReference>
<dbReference type="NCBIfam" id="NF003652">
    <property type="entry name" value="PRK05286.2-5"/>
    <property type="match status" value="1"/>
</dbReference>
<dbReference type="NCBIfam" id="TIGR01036">
    <property type="entry name" value="pyrD_sub2"/>
    <property type="match status" value="1"/>
</dbReference>
<dbReference type="PANTHER" id="PTHR48109:SF4">
    <property type="entry name" value="DIHYDROOROTATE DEHYDROGENASE (QUINONE), MITOCHONDRIAL"/>
    <property type="match status" value="1"/>
</dbReference>
<dbReference type="PANTHER" id="PTHR48109">
    <property type="entry name" value="DIHYDROOROTATE DEHYDROGENASE (QUINONE), MITOCHONDRIAL-RELATED"/>
    <property type="match status" value="1"/>
</dbReference>
<dbReference type="Pfam" id="PF01180">
    <property type="entry name" value="DHO_dh"/>
    <property type="match status" value="1"/>
</dbReference>
<dbReference type="SUPFAM" id="SSF51395">
    <property type="entry name" value="FMN-linked oxidoreductases"/>
    <property type="match status" value="1"/>
</dbReference>
<dbReference type="PROSITE" id="PS00911">
    <property type="entry name" value="DHODEHASE_1"/>
    <property type="match status" value="1"/>
</dbReference>
<dbReference type="PROSITE" id="PS00912">
    <property type="entry name" value="DHODEHASE_2"/>
    <property type="match status" value="1"/>
</dbReference>
<reference key="1">
    <citation type="journal article" date="2002" name="J. Bacteriol.">
        <title>Whole-genome comparison of Mycobacterium tuberculosis clinical and laboratory strains.</title>
        <authorList>
            <person name="Fleischmann R.D."/>
            <person name="Alland D."/>
            <person name="Eisen J.A."/>
            <person name="Carpenter L."/>
            <person name="White O."/>
            <person name="Peterson J.D."/>
            <person name="DeBoy R.T."/>
            <person name="Dodson R.J."/>
            <person name="Gwinn M.L."/>
            <person name="Haft D.H."/>
            <person name="Hickey E.K."/>
            <person name="Kolonay J.F."/>
            <person name="Nelson W.C."/>
            <person name="Umayam L.A."/>
            <person name="Ermolaeva M.D."/>
            <person name="Salzberg S.L."/>
            <person name="Delcher A."/>
            <person name="Utterback T.R."/>
            <person name="Weidman J.F."/>
            <person name="Khouri H.M."/>
            <person name="Gill J."/>
            <person name="Mikula A."/>
            <person name="Bishai W."/>
            <person name="Jacobs W.R. Jr."/>
            <person name="Venter J.C."/>
            <person name="Fraser C.M."/>
        </authorList>
    </citation>
    <scope>NUCLEOTIDE SEQUENCE [LARGE SCALE GENOMIC DNA]</scope>
    <source>
        <strain>CDC 1551 / Oshkosh</strain>
    </source>
</reference>
<name>PYRD_MYCTO</name>